<gene>
    <name evidence="1" type="primary">syd</name>
    <name type="ordered locus">swp_3542</name>
</gene>
<dbReference type="EMBL" id="CP000472">
    <property type="protein sequence ID" value="ACJ30234.1"/>
    <property type="molecule type" value="Genomic_DNA"/>
</dbReference>
<dbReference type="RefSeq" id="WP_020913581.1">
    <property type="nucleotide sequence ID" value="NC_011566.1"/>
</dbReference>
<dbReference type="SMR" id="B8CQA4"/>
<dbReference type="STRING" id="225849.swp_3542"/>
<dbReference type="KEGG" id="swp:swp_3542"/>
<dbReference type="eggNOG" id="ENOG502ZCMR">
    <property type="taxonomic scope" value="Bacteria"/>
</dbReference>
<dbReference type="HOGENOM" id="CLU_121866_0_0_6"/>
<dbReference type="OrthoDB" id="5599437at2"/>
<dbReference type="Proteomes" id="UP000000753">
    <property type="component" value="Chromosome"/>
</dbReference>
<dbReference type="GO" id="GO:0009898">
    <property type="term" value="C:cytoplasmic side of plasma membrane"/>
    <property type="evidence" value="ECO:0007669"/>
    <property type="project" value="InterPro"/>
</dbReference>
<dbReference type="CDD" id="cd16323">
    <property type="entry name" value="Syd"/>
    <property type="match status" value="1"/>
</dbReference>
<dbReference type="Gene3D" id="3.40.1580.20">
    <property type="entry name" value="Syd protein"/>
    <property type="match status" value="1"/>
</dbReference>
<dbReference type="HAMAP" id="MF_01104">
    <property type="entry name" value="Syd"/>
    <property type="match status" value="1"/>
</dbReference>
<dbReference type="InterPro" id="IPR009948">
    <property type="entry name" value="Syd"/>
</dbReference>
<dbReference type="InterPro" id="IPR038228">
    <property type="entry name" value="Syd_sf"/>
</dbReference>
<dbReference type="NCBIfam" id="NF003439">
    <property type="entry name" value="PRK04968.1"/>
    <property type="match status" value="1"/>
</dbReference>
<dbReference type="Pfam" id="PF07348">
    <property type="entry name" value="Syd"/>
    <property type="match status" value="1"/>
</dbReference>
<keyword id="KW-0997">Cell inner membrane</keyword>
<keyword id="KW-1003">Cell membrane</keyword>
<keyword id="KW-0472">Membrane</keyword>
<reference key="1">
    <citation type="journal article" date="2008" name="PLoS ONE">
        <title>Environmental adaptation: genomic analysis of the piezotolerant and psychrotolerant deep-sea iron reducing bacterium Shewanella piezotolerans WP3.</title>
        <authorList>
            <person name="Wang F."/>
            <person name="Wang J."/>
            <person name="Jian H."/>
            <person name="Zhang B."/>
            <person name="Li S."/>
            <person name="Wang F."/>
            <person name="Zeng X."/>
            <person name="Gao L."/>
            <person name="Bartlett D.H."/>
            <person name="Yu J."/>
            <person name="Hu S."/>
            <person name="Xiao X."/>
        </authorList>
    </citation>
    <scope>NUCLEOTIDE SEQUENCE [LARGE SCALE GENOMIC DNA]</scope>
    <source>
        <strain>WP3 / JCM 13877</strain>
    </source>
</reference>
<accession>B8CQA4</accession>
<feature type="chain" id="PRO_1000137042" description="Protein Syd">
    <location>
        <begin position="1"/>
        <end position="215"/>
    </location>
</feature>
<name>SYDP_SHEPW</name>
<comment type="function">
    <text evidence="1">Interacts with the SecY protein in vivo. May bind preferentially to an uncomplexed state of SecY, thus functioning either as a chelating agent for excess SecY in the cell or as a regulatory factor that negatively controls the translocase function.</text>
</comment>
<comment type="subcellular location">
    <subcellularLocation>
        <location evidence="1">Cell inner membrane</location>
        <topology evidence="1">Peripheral membrane protein</topology>
        <orientation evidence="1">Cytoplasmic side</orientation>
    </subcellularLocation>
    <text evidence="1">Loosely associated with the cytoplasmic side of the inner membrane, probably via SecY.</text>
</comment>
<comment type="similarity">
    <text evidence="1">Belongs to the Syd family.</text>
</comment>
<organism>
    <name type="scientific">Shewanella piezotolerans (strain WP3 / JCM 13877)</name>
    <dbReference type="NCBI Taxonomy" id="225849"/>
    <lineage>
        <taxon>Bacteria</taxon>
        <taxon>Pseudomonadati</taxon>
        <taxon>Pseudomonadota</taxon>
        <taxon>Gammaproteobacteria</taxon>
        <taxon>Alteromonadales</taxon>
        <taxon>Shewanellaceae</taxon>
        <taxon>Shewanella</taxon>
    </lineage>
</organism>
<sequence length="215" mass="24406">MSSLPALDIFLSDYQQAYLDTLGEHPRYYAQQQASECIVGDVDVETEEALQWKSVVRVDTGRFDNVEHALELSLHGDINAFYGSHFAASLMFDSQWGTGELLQAWSQSDFEHLQQNMIGHLMMKKKLKQEPTWFIGVFDDEDKMITVNNADGSVWIEIAGQAQSVKLADSLNSFISEVSPRVAPPVKLVEEVIPAYDHPGIWQRMKIMWRNLLGK</sequence>
<protein>
    <recommendedName>
        <fullName evidence="1">Protein Syd</fullName>
    </recommendedName>
</protein>
<evidence type="ECO:0000255" key="1">
    <source>
        <dbReference type="HAMAP-Rule" id="MF_01104"/>
    </source>
</evidence>
<proteinExistence type="inferred from homology"/>